<name>YGL1_GEOSE</name>
<reference key="1">
    <citation type="journal article" date="1992" name="Gene">
        <title>Cloning and characterization of a gene from Bacillus stearothermophilus var. non-diastaticus encoding a glycerol dehydrogenase.</title>
        <authorList>
            <person name="Mallinder P.R."/>
            <person name="Pritchard A."/>
            <person name="Moir A."/>
        </authorList>
    </citation>
    <scope>NUCLEOTIDE SEQUENCE [GENOMIC DNA]</scope>
    <source>
        <strain>DSM 2334 / Var. Non-diastaticus</strain>
    </source>
</reference>
<dbReference type="EMBL" id="M65289">
    <property type="protein sequence ID" value="AAA22476.1"/>
    <property type="molecule type" value="Genomic_DNA"/>
</dbReference>
<dbReference type="PIR" id="PQ0298">
    <property type="entry name" value="PQ0298"/>
</dbReference>
<dbReference type="GO" id="GO:0004672">
    <property type="term" value="F:protein kinase activity"/>
    <property type="evidence" value="ECO:0007669"/>
    <property type="project" value="TreeGrafter"/>
</dbReference>
<dbReference type="InterPro" id="IPR013153">
    <property type="entry name" value="Prk_AAA_dom"/>
</dbReference>
<dbReference type="PANTHER" id="PTHR30267">
    <property type="entry name" value="PROTEIN KINASE PRKA"/>
    <property type="match status" value="1"/>
</dbReference>
<dbReference type="PANTHER" id="PTHR30267:SF2">
    <property type="entry name" value="PROTEIN PRKA"/>
    <property type="match status" value="1"/>
</dbReference>
<dbReference type="Pfam" id="PF08298">
    <property type="entry name" value="AAA_PrkA"/>
    <property type="match status" value="1"/>
</dbReference>
<protein>
    <recommendedName>
        <fullName>Uncharacterized protein in gldA 5'region</fullName>
    </recommendedName>
    <alternativeName>
        <fullName>ORF1</fullName>
    </alternativeName>
</protein>
<sequence>MDILKKIEKHREMEERLKWEGTFAEYLEILKEKPWIAQSAHSRVYNMIKDAGIEEINGRKRYKFFNQEIFGLDEALERLVEEYFHPAAKRLDVRKRI</sequence>
<feature type="chain" id="PRO_0000066232" description="Uncharacterized protein in gldA 5'region">
    <location>
        <begin position="1"/>
        <end position="97" status="greater than"/>
    </location>
</feature>
<feature type="non-terminal residue">
    <location>
        <position position="97"/>
    </location>
</feature>
<organism>
    <name type="scientific">Geobacillus stearothermophilus</name>
    <name type="common">Bacillus stearothermophilus</name>
    <dbReference type="NCBI Taxonomy" id="1422"/>
    <lineage>
        <taxon>Bacteria</taxon>
        <taxon>Bacillati</taxon>
        <taxon>Bacillota</taxon>
        <taxon>Bacilli</taxon>
        <taxon>Bacillales</taxon>
        <taxon>Anoxybacillaceae</taxon>
        <taxon>Geobacillus</taxon>
    </lineage>
</organism>
<proteinExistence type="predicted"/>
<accession>P32812</accession>